<accession>O45145</accession>
<proteinExistence type="inferred from homology"/>
<sequence length="272" mass="31162">MESSSINRWFEYESGHAWCESAYKYQTLPYVAEFANTCTNLPIIVLPLVNIMLLRRYLHDVNGGLIFPQLLLTFNGLASTYYHATLNLFGQLVDELSLVWIITVFLVVYIPVMKWFPEKFSKRLTLVRWVVLIVTALVSGLCFLEPNLNAIALMLFSIPAAVVINYEGKQSGIPDIESFPSRILALWGVAFSFWFADRLLCDFWLYLGTPYLHALFHLLAGLAGYTIFIMFSMIDIESRTKTHKYTAAVRYFPGKNGSIFSFPYISLKERSQ</sequence>
<comment type="function">
    <text evidence="1 4">Hydrolyzes the sphingolipid ceramide into sphingoid base and free fatty acid (By similarity). C.elegans contain specific sphingoid bases, which are unique or different in structure compared to the sphingoid bases found in other animals. Two examples of these distinctive compounds are: 15-methylhexadecasphinganine and 15-methylhexadecasphing-4-enine (PubMed:30155209).</text>
</comment>
<comment type="catalytic activity">
    <reaction evidence="5">
        <text>an N-acyl-sphingoid base + H2O = a sphingoid base + a fatty acid</text>
        <dbReference type="Rhea" id="RHEA:78455"/>
        <dbReference type="ChEBI" id="CHEBI:15377"/>
        <dbReference type="ChEBI" id="CHEBI:28868"/>
        <dbReference type="ChEBI" id="CHEBI:83273"/>
        <dbReference type="ChEBI" id="CHEBI:84410"/>
    </reaction>
    <physiologicalReaction direction="left-to-right" evidence="5">
        <dbReference type="Rhea" id="RHEA:78456"/>
    </physiologicalReaction>
</comment>
<comment type="catalytic activity">
    <reaction evidence="1">
        <text>an N-acylsphing-4-enine + H2O = sphing-4-enine + a fatty acid</text>
        <dbReference type="Rhea" id="RHEA:20856"/>
        <dbReference type="ChEBI" id="CHEBI:15377"/>
        <dbReference type="ChEBI" id="CHEBI:28868"/>
        <dbReference type="ChEBI" id="CHEBI:52639"/>
        <dbReference type="ChEBI" id="CHEBI:57756"/>
        <dbReference type="EC" id="3.5.1.23"/>
    </reaction>
    <physiologicalReaction direction="left-to-right" evidence="1">
        <dbReference type="Rhea" id="RHEA:20857"/>
    </physiologicalReaction>
</comment>
<comment type="catalytic activity">
    <reaction evidence="5">
        <text>an N-acyl-15-methylhexadecasphing-4-enine + H2O = 15-methylhexadecasphing-4-enine + a fatty acid</text>
        <dbReference type="Rhea" id="RHEA:34711"/>
        <dbReference type="ChEBI" id="CHEBI:15377"/>
        <dbReference type="ChEBI" id="CHEBI:28868"/>
        <dbReference type="ChEBI" id="CHEBI:70771"/>
        <dbReference type="ChEBI" id="CHEBI:70846"/>
    </reaction>
    <physiologicalReaction direction="left-to-right" evidence="5">
        <dbReference type="Rhea" id="RHEA:34712"/>
    </physiologicalReaction>
</comment>
<comment type="cofactor">
    <cofactor evidence="2">
        <name>Zn(2+)</name>
        <dbReference type="ChEBI" id="CHEBI:29105"/>
    </cofactor>
</comment>
<comment type="pathway">
    <text>Lipid metabolism; sphingolipid metabolism.</text>
</comment>
<comment type="subcellular location">
    <subcellularLocation>
        <location evidence="5">Membrane</location>
        <topology evidence="5">Multi-pass membrane protein</topology>
    </subcellularLocation>
</comment>
<comment type="similarity">
    <text evidence="5">Belongs to the alkaline ceramidase family.</text>
</comment>
<name>ACASE_CAEEL</name>
<feature type="chain" id="PRO_0000247751" description="Alkaline ceramidase">
    <location>
        <begin position="1"/>
        <end position="272"/>
    </location>
</feature>
<feature type="transmembrane region" description="Helical" evidence="3">
    <location>
        <begin position="34"/>
        <end position="54"/>
    </location>
</feature>
<feature type="transmembrane region" description="Helical" evidence="3">
    <location>
        <begin position="61"/>
        <end position="81"/>
    </location>
</feature>
<feature type="transmembrane region" description="Helical" evidence="3">
    <location>
        <begin position="96"/>
        <end position="116"/>
    </location>
</feature>
<feature type="transmembrane region" description="Helical" evidence="3">
    <location>
        <begin position="124"/>
        <end position="144"/>
    </location>
</feature>
<feature type="transmembrane region" description="Helical" evidence="3">
    <location>
        <begin position="148"/>
        <end position="168"/>
    </location>
</feature>
<feature type="transmembrane region" description="Helical" evidence="3">
    <location>
        <begin position="183"/>
        <end position="203"/>
    </location>
</feature>
<feature type="transmembrane region" description="Helical" evidence="3">
    <location>
        <begin position="214"/>
        <end position="234"/>
    </location>
</feature>
<feature type="binding site" evidence="2">
    <location>
        <position position="83"/>
    </location>
    <ligand>
        <name>Zn(2+)</name>
        <dbReference type="ChEBI" id="CHEBI:29105"/>
        <note>catalytic</note>
    </ligand>
</feature>
<feature type="binding site" evidence="2">
    <location>
        <position position="213"/>
    </location>
    <ligand>
        <name>Zn(2+)</name>
        <dbReference type="ChEBI" id="CHEBI:29105"/>
        <note>catalytic</note>
    </ligand>
</feature>
<feature type="binding site" evidence="2">
    <location>
        <position position="217"/>
    </location>
    <ligand>
        <name>Zn(2+)</name>
        <dbReference type="ChEBI" id="CHEBI:29105"/>
        <note>catalytic</note>
    </ligand>
</feature>
<feature type="glycosylation site" description="N-linked (GlcNAc...) asparagine" evidence="3">
    <location>
        <position position="256"/>
    </location>
</feature>
<keyword id="KW-0325">Glycoprotein</keyword>
<keyword id="KW-0378">Hydrolase</keyword>
<keyword id="KW-0443">Lipid metabolism</keyword>
<keyword id="KW-0472">Membrane</keyword>
<keyword id="KW-0479">Metal-binding</keyword>
<keyword id="KW-1185">Reference proteome</keyword>
<keyword id="KW-0812">Transmembrane</keyword>
<keyword id="KW-1133">Transmembrane helix</keyword>
<keyword id="KW-0862">Zinc</keyword>
<reference key="1">
    <citation type="journal article" date="1998" name="Science">
        <title>Genome sequence of the nematode C. elegans: a platform for investigating biology.</title>
        <authorList>
            <consortium name="The C. elegans sequencing consortium"/>
        </authorList>
    </citation>
    <scope>NUCLEOTIDE SEQUENCE [LARGE SCALE GENOMIC DNA]</scope>
    <source>
        <strain>Bristol N2</strain>
    </source>
</reference>
<reference key="2">
    <citation type="journal article" date="2017" name="Chem. Sci.">
        <title>Structure and conserved function of iso-branched sphingoid bases from the nematode Caenorhabditis elegans.</title>
        <authorList>
            <person name="Hannich J.T."/>
            <person name="Mellal D."/>
            <person name="Feng S."/>
            <person name="Zumbuehl A."/>
            <person name="Riezman H."/>
        </authorList>
    </citation>
    <scope>FUNCTION</scope>
</reference>
<protein>
    <recommendedName>
        <fullName>Alkaline ceramidase</fullName>
        <shortName>AlkCDase</shortName>
        <ecNumber>3.5.1.23</ecNumber>
    </recommendedName>
    <alternativeName>
        <fullName>Alkaline N-acylsphingosine amidohydrolase</fullName>
    </alternativeName>
    <alternativeName>
        <fullName>Alkaline acylsphingosine deacylase</fullName>
    </alternativeName>
</protein>
<evidence type="ECO:0000250" key="1">
    <source>
        <dbReference type="UniProtKB" id="Q8VD53"/>
    </source>
</evidence>
<evidence type="ECO:0000250" key="2">
    <source>
        <dbReference type="UniProtKB" id="Q9NUN7"/>
    </source>
</evidence>
<evidence type="ECO:0000255" key="3"/>
<evidence type="ECO:0000269" key="4">
    <source>
    </source>
</evidence>
<evidence type="ECO:0000305" key="5"/>
<gene>
    <name type="ORF">W02F12.2</name>
</gene>
<dbReference type="EC" id="3.5.1.23"/>
<dbReference type="EMBL" id="FO081630">
    <property type="protein sequence ID" value="CCD72931.1"/>
    <property type="molecule type" value="Genomic_DNA"/>
</dbReference>
<dbReference type="PIR" id="T32993">
    <property type="entry name" value="T32993"/>
</dbReference>
<dbReference type="RefSeq" id="NP_001370798.1">
    <property type="nucleotide sequence ID" value="NM_001383326.2"/>
</dbReference>
<dbReference type="RefSeq" id="NP_504697.2">
    <property type="nucleotide sequence ID" value="NM_072296.5"/>
</dbReference>
<dbReference type="SMR" id="O45145"/>
<dbReference type="FunCoup" id="O45145">
    <property type="interactions" value="811"/>
</dbReference>
<dbReference type="STRING" id="6239.W02F12.2.1"/>
<dbReference type="PaxDb" id="6239-W02F12.2"/>
<dbReference type="PeptideAtlas" id="O45145"/>
<dbReference type="EnsemblMetazoa" id="W02F12.2.1">
    <property type="protein sequence ID" value="W02F12.2.1"/>
    <property type="gene ID" value="WBGene00020947"/>
</dbReference>
<dbReference type="GeneID" id="189124"/>
<dbReference type="UCSC" id="W02F12.2">
    <property type="organism name" value="c. elegans"/>
</dbReference>
<dbReference type="AGR" id="WB:WBGene00020947"/>
<dbReference type="WormBase" id="W02F12.2">
    <property type="protein sequence ID" value="CE33333"/>
    <property type="gene ID" value="WBGene00020947"/>
</dbReference>
<dbReference type="eggNOG" id="KOG2329">
    <property type="taxonomic scope" value="Eukaryota"/>
</dbReference>
<dbReference type="GeneTree" id="ENSGT00730000110920"/>
<dbReference type="HOGENOM" id="CLU_088280_0_0_1"/>
<dbReference type="InParanoid" id="O45145"/>
<dbReference type="OMA" id="TFCFVKP"/>
<dbReference type="OrthoDB" id="187171at2759"/>
<dbReference type="PhylomeDB" id="O45145"/>
<dbReference type="Reactome" id="R-CEL-9845614">
    <property type="pathway name" value="Sphingolipid catabolism"/>
</dbReference>
<dbReference type="UniPathway" id="UPA00222"/>
<dbReference type="PRO" id="PR:O45145"/>
<dbReference type="Proteomes" id="UP000001940">
    <property type="component" value="Chromosome V"/>
</dbReference>
<dbReference type="Bgee" id="WBGene00020947">
    <property type="expression patterns" value="Expressed in pharyngeal muscle cell (C elegans) and 3 other cell types or tissues"/>
</dbReference>
<dbReference type="GO" id="GO:0000139">
    <property type="term" value="C:Golgi membrane"/>
    <property type="evidence" value="ECO:0000250"/>
    <property type="project" value="WormBase"/>
</dbReference>
<dbReference type="GO" id="GO:0046872">
    <property type="term" value="F:metal ion binding"/>
    <property type="evidence" value="ECO:0007669"/>
    <property type="project" value="UniProtKB-KW"/>
</dbReference>
<dbReference type="GO" id="GO:0017040">
    <property type="term" value="F:N-acylsphingosine amidohydrolase activity"/>
    <property type="evidence" value="ECO:0000250"/>
    <property type="project" value="WormBase"/>
</dbReference>
<dbReference type="GO" id="GO:0046514">
    <property type="term" value="P:ceramide catabolic process"/>
    <property type="evidence" value="ECO:0000318"/>
    <property type="project" value="GO_Central"/>
</dbReference>
<dbReference type="GO" id="GO:0046512">
    <property type="term" value="P:sphingosine biosynthetic process"/>
    <property type="evidence" value="ECO:0000250"/>
    <property type="project" value="WormBase"/>
</dbReference>
<dbReference type="InterPro" id="IPR008901">
    <property type="entry name" value="ACER"/>
</dbReference>
<dbReference type="PANTHER" id="PTHR46139">
    <property type="entry name" value="ALKALINE CERAMIDASE"/>
    <property type="match status" value="1"/>
</dbReference>
<dbReference type="PANTHER" id="PTHR46139:SF3">
    <property type="entry name" value="ALKALINE CERAMIDASE"/>
    <property type="match status" value="1"/>
</dbReference>
<dbReference type="Pfam" id="PF05875">
    <property type="entry name" value="Ceramidase"/>
    <property type="match status" value="1"/>
</dbReference>
<organism>
    <name type="scientific">Caenorhabditis elegans</name>
    <dbReference type="NCBI Taxonomy" id="6239"/>
    <lineage>
        <taxon>Eukaryota</taxon>
        <taxon>Metazoa</taxon>
        <taxon>Ecdysozoa</taxon>
        <taxon>Nematoda</taxon>
        <taxon>Chromadorea</taxon>
        <taxon>Rhabditida</taxon>
        <taxon>Rhabditina</taxon>
        <taxon>Rhabditomorpha</taxon>
        <taxon>Rhabditoidea</taxon>
        <taxon>Rhabditidae</taxon>
        <taxon>Peloderinae</taxon>
        <taxon>Caenorhabditis</taxon>
    </lineage>
</organism>